<sequence>MIRSVVRGIGSALPKRVMKNTDFEGIVETSDEWIVQRTGIRERHIAGEGETTVSLGAAAARAAIENAGLQPSDIDLVLLATSTPNNTFPASAVAIQRELGITRGFAFDLQAVCSGFIYAITTADLYIRGGMARRVLVIGAETFSRILDWTDRTTCVLFGDGAGAIVLEAAEGHGLTSDRGILAANLRSDGNHKEKLYVDGGPSTTQTVGHLRMEGREVFKHAVGMITDVIEASFEATGLTAEDIDWFVPHQANKRIIDASAKKLHIAEEKVVITVDRHGNTSAASVPLALATAVADGRIKKGDLVLLEAMGGGFTWGAVLVRW</sequence>
<proteinExistence type="inferred from homology"/>
<comment type="function">
    <text evidence="1">Catalyzes the condensation reaction of fatty acid synthesis by the addition to an acyl acceptor of two carbons from malonyl-ACP. Catalyzes the first condensation reaction which initiates fatty acid synthesis and may therefore play a role in governing the total rate of fatty acid production. Possesses both acetoacetyl-ACP synthase and acetyl transacylase activities. Its substrate specificity determines the biosynthesis of branched-chain and/or straight-chain of fatty acids.</text>
</comment>
<comment type="catalytic activity">
    <reaction evidence="1">
        <text>malonyl-[ACP] + acetyl-CoA + H(+) = 3-oxobutanoyl-[ACP] + CO2 + CoA</text>
        <dbReference type="Rhea" id="RHEA:12080"/>
        <dbReference type="Rhea" id="RHEA-COMP:9623"/>
        <dbReference type="Rhea" id="RHEA-COMP:9625"/>
        <dbReference type="ChEBI" id="CHEBI:15378"/>
        <dbReference type="ChEBI" id="CHEBI:16526"/>
        <dbReference type="ChEBI" id="CHEBI:57287"/>
        <dbReference type="ChEBI" id="CHEBI:57288"/>
        <dbReference type="ChEBI" id="CHEBI:78449"/>
        <dbReference type="ChEBI" id="CHEBI:78450"/>
        <dbReference type="EC" id="2.3.1.180"/>
    </reaction>
</comment>
<comment type="pathway">
    <text evidence="1">Lipid metabolism; fatty acid biosynthesis.</text>
</comment>
<comment type="subunit">
    <text evidence="1">Homodimer.</text>
</comment>
<comment type="subcellular location">
    <subcellularLocation>
        <location evidence="1">Cytoplasm</location>
    </subcellularLocation>
</comment>
<comment type="domain">
    <text evidence="1">The last Arg residue of the ACP-binding site is essential for the weak association between ACP/AcpP and FabH.</text>
</comment>
<comment type="similarity">
    <text evidence="1">Belongs to the thiolase-like superfamily. FabH family.</text>
</comment>
<gene>
    <name evidence="1" type="primary">fabH</name>
    <name type="ordered locus">BruAb1_0792</name>
</gene>
<organism>
    <name type="scientific">Brucella abortus biovar 1 (strain 9-941)</name>
    <dbReference type="NCBI Taxonomy" id="262698"/>
    <lineage>
        <taxon>Bacteria</taxon>
        <taxon>Pseudomonadati</taxon>
        <taxon>Pseudomonadota</taxon>
        <taxon>Alphaproteobacteria</taxon>
        <taxon>Hyphomicrobiales</taxon>
        <taxon>Brucellaceae</taxon>
        <taxon>Brucella/Ochrobactrum group</taxon>
        <taxon>Brucella</taxon>
    </lineage>
</organism>
<keyword id="KW-0012">Acyltransferase</keyword>
<keyword id="KW-0963">Cytoplasm</keyword>
<keyword id="KW-0275">Fatty acid biosynthesis</keyword>
<keyword id="KW-0276">Fatty acid metabolism</keyword>
<keyword id="KW-0444">Lipid biosynthesis</keyword>
<keyword id="KW-0443">Lipid metabolism</keyword>
<keyword id="KW-0511">Multifunctional enzyme</keyword>
<keyword id="KW-0808">Transferase</keyword>
<dbReference type="EC" id="2.3.1.180" evidence="1"/>
<dbReference type="EMBL" id="AE017223">
    <property type="protein sequence ID" value="AAX74160.1"/>
    <property type="molecule type" value="Genomic_DNA"/>
</dbReference>
<dbReference type="RefSeq" id="WP_002963913.1">
    <property type="nucleotide sequence ID" value="NC_006932.1"/>
</dbReference>
<dbReference type="SMR" id="Q57DX4"/>
<dbReference type="EnsemblBacteria" id="AAX74160">
    <property type="protein sequence ID" value="AAX74160"/>
    <property type="gene ID" value="BruAb1_0792"/>
</dbReference>
<dbReference type="KEGG" id="bmb:BruAb1_0792"/>
<dbReference type="HOGENOM" id="CLU_039592_3_1_5"/>
<dbReference type="UniPathway" id="UPA00094"/>
<dbReference type="Proteomes" id="UP000000540">
    <property type="component" value="Chromosome I"/>
</dbReference>
<dbReference type="GO" id="GO:0005737">
    <property type="term" value="C:cytoplasm"/>
    <property type="evidence" value="ECO:0007669"/>
    <property type="project" value="UniProtKB-SubCell"/>
</dbReference>
<dbReference type="GO" id="GO:0004315">
    <property type="term" value="F:3-oxoacyl-[acyl-carrier-protein] synthase activity"/>
    <property type="evidence" value="ECO:0007669"/>
    <property type="project" value="InterPro"/>
</dbReference>
<dbReference type="GO" id="GO:0033818">
    <property type="term" value="F:beta-ketoacyl-acyl-carrier-protein synthase III activity"/>
    <property type="evidence" value="ECO:0007669"/>
    <property type="project" value="UniProtKB-UniRule"/>
</dbReference>
<dbReference type="GO" id="GO:0006633">
    <property type="term" value="P:fatty acid biosynthetic process"/>
    <property type="evidence" value="ECO:0007669"/>
    <property type="project" value="UniProtKB-UniRule"/>
</dbReference>
<dbReference type="CDD" id="cd00830">
    <property type="entry name" value="KAS_III"/>
    <property type="match status" value="1"/>
</dbReference>
<dbReference type="FunFam" id="3.40.47.10:FF:000004">
    <property type="entry name" value="3-oxoacyl-[acyl-carrier-protein] synthase 3"/>
    <property type="match status" value="1"/>
</dbReference>
<dbReference type="Gene3D" id="3.40.47.10">
    <property type="match status" value="1"/>
</dbReference>
<dbReference type="HAMAP" id="MF_01815">
    <property type="entry name" value="FabH"/>
    <property type="match status" value="1"/>
</dbReference>
<dbReference type="InterPro" id="IPR013747">
    <property type="entry name" value="ACP_syn_III_C"/>
</dbReference>
<dbReference type="InterPro" id="IPR013751">
    <property type="entry name" value="ACP_syn_III_N"/>
</dbReference>
<dbReference type="InterPro" id="IPR004655">
    <property type="entry name" value="FabH"/>
</dbReference>
<dbReference type="InterPro" id="IPR016039">
    <property type="entry name" value="Thiolase-like"/>
</dbReference>
<dbReference type="NCBIfam" id="TIGR00747">
    <property type="entry name" value="fabH"/>
    <property type="match status" value="1"/>
</dbReference>
<dbReference type="NCBIfam" id="NF006829">
    <property type="entry name" value="PRK09352.1"/>
    <property type="match status" value="1"/>
</dbReference>
<dbReference type="PANTHER" id="PTHR43091">
    <property type="entry name" value="3-OXOACYL-[ACYL-CARRIER-PROTEIN] SYNTHASE"/>
    <property type="match status" value="1"/>
</dbReference>
<dbReference type="PANTHER" id="PTHR43091:SF1">
    <property type="entry name" value="BETA-KETOACYL-[ACYL-CARRIER-PROTEIN] SYNTHASE III, CHLOROPLASTIC"/>
    <property type="match status" value="1"/>
</dbReference>
<dbReference type="Pfam" id="PF08545">
    <property type="entry name" value="ACP_syn_III"/>
    <property type="match status" value="1"/>
</dbReference>
<dbReference type="Pfam" id="PF08541">
    <property type="entry name" value="ACP_syn_III_C"/>
    <property type="match status" value="1"/>
</dbReference>
<dbReference type="SUPFAM" id="SSF53901">
    <property type="entry name" value="Thiolase-like"/>
    <property type="match status" value="1"/>
</dbReference>
<protein>
    <recommendedName>
        <fullName evidence="1">Beta-ketoacyl-[acyl-carrier-protein] synthase III</fullName>
        <shortName evidence="1">Beta-ketoacyl-ACP synthase III</shortName>
        <shortName evidence="1">KAS III</shortName>
        <ecNumber evidence="1">2.3.1.180</ecNumber>
    </recommendedName>
    <alternativeName>
        <fullName evidence="1">3-oxoacyl-[acyl-carrier-protein] synthase 3</fullName>
    </alternativeName>
    <alternativeName>
        <fullName evidence="1">3-oxoacyl-[acyl-carrier-protein] synthase III</fullName>
    </alternativeName>
</protein>
<name>FABH_BRUAB</name>
<reference key="1">
    <citation type="journal article" date="2005" name="J. Bacteriol.">
        <title>Completion of the genome sequence of Brucella abortus and comparison to the highly similar genomes of Brucella melitensis and Brucella suis.</title>
        <authorList>
            <person name="Halling S.M."/>
            <person name="Peterson-Burch B.D."/>
            <person name="Bricker B.J."/>
            <person name="Zuerner R.L."/>
            <person name="Qing Z."/>
            <person name="Li L.-L."/>
            <person name="Kapur V."/>
            <person name="Alt D.P."/>
            <person name="Olsen S.C."/>
        </authorList>
    </citation>
    <scope>NUCLEOTIDE SEQUENCE [LARGE SCALE GENOMIC DNA]</scope>
    <source>
        <strain>9-941</strain>
    </source>
</reference>
<accession>Q57DX4</accession>
<evidence type="ECO:0000255" key="1">
    <source>
        <dbReference type="HAMAP-Rule" id="MF_01815"/>
    </source>
</evidence>
<feature type="chain" id="PRO_1000187848" description="Beta-ketoacyl-[acyl-carrier-protein] synthase III">
    <location>
        <begin position="1"/>
        <end position="323"/>
    </location>
</feature>
<feature type="region of interest" description="ACP-binding" evidence="1">
    <location>
        <begin position="251"/>
        <end position="255"/>
    </location>
</feature>
<feature type="active site" evidence="1">
    <location>
        <position position="113"/>
    </location>
</feature>
<feature type="active site" evidence="1">
    <location>
        <position position="250"/>
    </location>
</feature>
<feature type="active site" evidence="1">
    <location>
        <position position="280"/>
    </location>
</feature>